<name>PYRB_ECOLU</name>
<reference key="1">
    <citation type="journal article" date="2009" name="PLoS Genet.">
        <title>Organised genome dynamics in the Escherichia coli species results in highly diverse adaptive paths.</title>
        <authorList>
            <person name="Touchon M."/>
            <person name="Hoede C."/>
            <person name="Tenaillon O."/>
            <person name="Barbe V."/>
            <person name="Baeriswyl S."/>
            <person name="Bidet P."/>
            <person name="Bingen E."/>
            <person name="Bonacorsi S."/>
            <person name="Bouchier C."/>
            <person name="Bouvet O."/>
            <person name="Calteau A."/>
            <person name="Chiapello H."/>
            <person name="Clermont O."/>
            <person name="Cruveiller S."/>
            <person name="Danchin A."/>
            <person name="Diard M."/>
            <person name="Dossat C."/>
            <person name="Karoui M.E."/>
            <person name="Frapy E."/>
            <person name="Garry L."/>
            <person name="Ghigo J.M."/>
            <person name="Gilles A.M."/>
            <person name="Johnson J."/>
            <person name="Le Bouguenec C."/>
            <person name="Lescat M."/>
            <person name="Mangenot S."/>
            <person name="Martinez-Jehanne V."/>
            <person name="Matic I."/>
            <person name="Nassif X."/>
            <person name="Oztas S."/>
            <person name="Petit M.A."/>
            <person name="Pichon C."/>
            <person name="Rouy Z."/>
            <person name="Ruf C.S."/>
            <person name="Schneider D."/>
            <person name="Tourret J."/>
            <person name="Vacherie B."/>
            <person name="Vallenet D."/>
            <person name="Medigue C."/>
            <person name="Rocha E.P.C."/>
            <person name="Denamur E."/>
        </authorList>
    </citation>
    <scope>NUCLEOTIDE SEQUENCE [LARGE SCALE GENOMIC DNA]</scope>
    <source>
        <strain>UMN026 / ExPEC</strain>
    </source>
</reference>
<comment type="function">
    <text evidence="1">Catalyzes the condensation of carbamoyl phosphate and aspartate to form carbamoyl aspartate and inorganic phosphate, the committed step in the de novo pyrimidine nucleotide biosynthesis pathway.</text>
</comment>
<comment type="catalytic activity">
    <reaction evidence="1">
        <text>carbamoyl phosphate + L-aspartate = N-carbamoyl-L-aspartate + phosphate + H(+)</text>
        <dbReference type="Rhea" id="RHEA:20013"/>
        <dbReference type="ChEBI" id="CHEBI:15378"/>
        <dbReference type="ChEBI" id="CHEBI:29991"/>
        <dbReference type="ChEBI" id="CHEBI:32814"/>
        <dbReference type="ChEBI" id="CHEBI:43474"/>
        <dbReference type="ChEBI" id="CHEBI:58228"/>
        <dbReference type="EC" id="2.1.3.2"/>
    </reaction>
</comment>
<comment type="pathway">
    <text evidence="1">Pyrimidine metabolism; UMP biosynthesis via de novo pathway; (S)-dihydroorotate from bicarbonate: step 2/3.</text>
</comment>
<comment type="subunit">
    <text evidence="1">Heterododecamer (2C3:3R2) of six catalytic PyrB chains organized as two trimers (C3), and six regulatory PyrI chains organized as three dimers (R2).</text>
</comment>
<comment type="similarity">
    <text evidence="1">Belongs to the aspartate/ornithine carbamoyltransferase superfamily. ATCase family.</text>
</comment>
<proteinExistence type="inferred from homology"/>
<keyword id="KW-0665">Pyrimidine biosynthesis</keyword>
<keyword id="KW-0808">Transferase</keyword>
<protein>
    <recommendedName>
        <fullName evidence="1">Aspartate carbamoyltransferase catalytic subunit</fullName>
        <ecNumber evidence="1">2.1.3.2</ecNumber>
    </recommendedName>
    <alternativeName>
        <fullName evidence="1">Aspartate transcarbamylase</fullName>
        <shortName evidence="1">ATCase</shortName>
    </alternativeName>
</protein>
<evidence type="ECO:0000255" key="1">
    <source>
        <dbReference type="HAMAP-Rule" id="MF_00001"/>
    </source>
</evidence>
<dbReference type="EC" id="2.1.3.2" evidence="1"/>
<dbReference type="EMBL" id="CU928163">
    <property type="protein sequence ID" value="CAR15890.1"/>
    <property type="molecule type" value="Genomic_DNA"/>
</dbReference>
<dbReference type="RefSeq" id="WP_000013046.1">
    <property type="nucleotide sequence ID" value="NC_011751.1"/>
</dbReference>
<dbReference type="RefSeq" id="YP_002415373.1">
    <property type="nucleotide sequence ID" value="NC_011751.1"/>
</dbReference>
<dbReference type="SMR" id="B7NGH8"/>
<dbReference type="STRING" id="585056.ECUMN_4778"/>
<dbReference type="GeneID" id="93777579"/>
<dbReference type="KEGG" id="eum:ECUMN_4778"/>
<dbReference type="PATRIC" id="fig|585056.7.peg.4944"/>
<dbReference type="HOGENOM" id="CLU_043846_1_2_6"/>
<dbReference type="UniPathway" id="UPA00070">
    <property type="reaction ID" value="UER00116"/>
</dbReference>
<dbReference type="Proteomes" id="UP000007097">
    <property type="component" value="Chromosome"/>
</dbReference>
<dbReference type="GO" id="GO:0005829">
    <property type="term" value="C:cytosol"/>
    <property type="evidence" value="ECO:0007669"/>
    <property type="project" value="TreeGrafter"/>
</dbReference>
<dbReference type="GO" id="GO:0016597">
    <property type="term" value="F:amino acid binding"/>
    <property type="evidence" value="ECO:0007669"/>
    <property type="project" value="InterPro"/>
</dbReference>
<dbReference type="GO" id="GO:0004070">
    <property type="term" value="F:aspartate carbamoyltransferase activity"/>
    <property type="evidence" value="ECO:0007669"/>
    <property type="project" value="UniProtKB-UniRule"/>
</dbReference>
<dbReference type="GO" id="GO:0006207">
    <property type="term" value="P:'de novo' pyrimidine nucleobase biosynthetic process"/>
    <property type="evidence" value="ECO:0007669"/>
    <property type="project" value="InterPro"/>
</dbReference>
<dbReference type="GO" id="GO:0044205">
    <property type="term" value="P:'de novo' UMP biosynthetic process"/>
    <property type="evidence" value="ECO:0007669"/>
    <property type="project" value="UniProtKB-UniRule"/>
</dbReference>
<dbReference type="GO" id="GO:0006520">
    <property type="term" value="P:amino acid metabolic process"/>
    <property type="evidence" value="ECO:0007669"/>
    <property type="project" value="InterPro"/>
</dbReference>
<dbReference type="FunFam" id="3.40.50.1370:FF:000001">
    <property type="entry name" value="Aspartate carbamoyltransferase"/>
    <property type="match status" value="1"/>
</dbReference>
<dbReference type="FunFam" id="3.40.50.1370:FF:000002">
    <property type="entry name" value="Aspartate carbamoyltransferase 2"/>
    <property type="match status" value="1"/>
</dbReference>
<dbReference type="Gene3D" id="3.40.50.1370">
    <property type="entry name" value="Aspartate/ornithine carbamoyltransferase"/>
    <property type="match status" value="2"/>
</dbReference>
<dbReference type="HAMAP" id="MF_00001">
    <property type="entry name" value="Asp_carb_tr"/>
    <property type="match status" value="1"/>
</dbReference>
<dbReference type="InterPro" id="IPR006132">
    <property type="entry name" value="Asp/Orn_carbamoyltranf_P-bd"/>
</dbReference>
<dbReference type="InterPro" id="IPR006130">
    <property type="entry name" value="Asp/Orn_carbamoylTrfase"/>
</dbReference>
<dbReference type="InterPro" id="IPR036901">
    <property type="entry name" value="Asp/Orn_carbamoylTrfase_sf"/>
</dbReference>
<dbReference type="InterPro" id="IPR002082">
    <property type="entry name" value="Asp_carbamoyltransf"/>
</dbReference>
<dbReference type="InterPro" id="IPR006131">
    <property type="entry name" value="Asp_carbamoyltransf_Asp/Orn-bd"/>
</dbReference>
<dbReference type="NCBIfam" id="TIGR00670">
    <property type="entry name" value="asp_carb_tr"/>
    <property type="match status" value="1"/>
</dbReference>
<dbReference type="NCBIfam" id="NF002032">
    <property type="entry name" value="PRK00856.1"/>
    <property type="match status" value="1"/>
</dbReference>
<dbReference type="PANTHER" id="PTHR45753:SF6">
    <property type="entry name" value="ASPARTATE CARBAMOYLTRANSFERASE"/>
    <property type="match status" value="1"/>
</dbReference>
<dbReference type="PANTHER" id="PTHR45753">
    <property type="entry name" value="ORNITHINE CARBAMOYLTRANSFERASE, MITOCHONDRIAL"/>
    <property type="match status" value="1"/>
</dbReference>
<dbReference type="Pfam" id="PF00185">
    <property type="entry name" value="OTCace"/>
    <property type="match status" value="1"/>
</dbReference>
<dbReference type="Pfam" id="PF02729">
    <property type="entry name" value="OTCace_N"/>
    <property type="match status" value="1"/>
</dbReference>
<dbReference type="PRINTS" id="PR00100">
    <property type="entry name" value="AOTCASE"/>
</dbReference>
<dbReference type="PRINTS" id="PR00101">
    <property type="entry name" value="ATCASE"/>
</dbReference>
<dbReference type="SUPFAM" id="SSF53671">
    <property type="entry name" value="Aspartate/ornithine carbamoyltransferase"/>
    <property type="match status" value="1"/>
</dbReference>
<dbReference type="PROSITE" id="PS00097">
    <property type="entry name" value="CARBAMOYLTRANSFERASE"/>
    <property type="match status" value="1"/>
</dbReference>
<accession>B7NGH8</accession>
<feature type="chain" id="PRO_1000191905" description="Aspartate carbamoyltransferase catalytic subunit">
    <location>
        <begin position="1"/>
        <end position="311"/>
    </location>
</feature>
<feature type="binding site" evidence="1">
    <location>
        <position position="55"/>
    </location>
    <ligand>
        <name>carbamoyl phosphate</name>
        <dbReference type="ChEBI" id="CHEBI:58228"/>
    </ligand>
</feature>
<feature type="binding site" evidence="1">
    <location>
        <position position="56"/>
    </location>
    <ligand>
        <name>carbamoyl phosphate</name>
        <dbReference type="ChEBI" id="CHEBI:58228"/>
    </ligand>
</feature>
<feature type="binding site" evidence="1">
    <location>
        <position position="85"/>
    </location>
    <ligand>
        <name>L-aspartate</name>
        <dbReference type="ChEBI" id="CHEBI:29991"/>
    </ligand>
</feature>
<feature type="binding site" evidence="1">
    <location>
        <position position="106"/>
    </location>
    <ligand>
        <name>carbamoyl phosphate</name>
        <dbReference type="ChEBI" id="CHEBI:58228"/>
    </ligand>
</feature>
<feature type="binding site" evidence="1">
    <location>
        <position position="135"/>
    </location>
    <ligand>
        <name>carbamoyl phosphate</name>
        <dbReference type="ChEBI" id="CHEBI:58228"/>
    </ligand>
</feature>
<feature type="binding site" evidence="1">
    <location>
        <position position="138"/>
    </location>
    <ligand>
        <name>carbamoyl phosphate</name>
        <dbReference type="ChEBI" id="CHEBI:58228"/>
    </ligand>
</feature>
<feature type="binding site" evidence="1">
    <location>
        <position position="168"/>
    </location>
    <ligand>
        <name>L-aspartate</name>
        <dbReference type="ChEBI" id="CHEBI:29991"/>
    </ligand>
</feature>
<feature type="binding site" evidence="1">
    <location>
        <position position="230"/>
    </location>
    <ligand>
        <name>L-aspartate</name>
        <dbReference type="ChEBI" id="CHEBI:29991"/>
    </ligand>
</feature>
<feature type="binding site" evidence="1">
    <location>
        <position position="268"/>
    </location>
    <ligand>
        <name>carbamoyl phosphate</name>
        <dbReference type="ChEBI" id="CHEBI:58228"/>
    </ligand>
</feature>
<feature type="binding site" evidence="1">
    <location>
        <position position="269"/>
    </location>
    <ligand>
        <name>carbamoyl phosphate</name>
        <dbReference type="ChEBI" id="CHEBI:58228"/>
    </ligand>
</feature>
<organism>
    <name type="scientific">Escherichia coli O17:K52:H18 (strain UMN026 / ExPEC)</name>
    <dbReference type="NCBI Taxonomy" id="585056"/>
    <lineage>
        <taxon>Bacteria</taxon>
        <taxon>Pseudomonadati</taxon>
        <taxon>Pseudomonadota</taxon>
        <taxon>Gammaproteobacteria</taxon>
        <taxon>Enterobacterales</taxon>
        <taxon>Enterobacteriaceae</taxon>
        <taxon>Escherichia</taxon>
    </lineage>
</organism>
<sequence>MANPLYQKHIISINDLSRDDLNLVLATAAKLKANPQPELLKHKVIASCFFEASTRTRLSFETSMHRLGASVVGFSDSANTSLGKKGETLADTISVISTYVDAIVMRHPQEGAARLATEFSGNVPVLNAGDGSNQHPTQTLLDLFTIQETQGRLDNLHVAMVGDLKYGRTVHSLTQALAKFDGNRFYFIAPDALAMPQYILDMLDEKGIAWSLHSSIEEVMAEVDILYMTRVQKERLDPSEYANVKAQFVLRASDLHNAKANMKVLHPLPRVDEIATDVDKTPHAWYFQQAGNGIFARQALLALVLNRDLVL</sequence>
<gene>
    <name evidence="1" type="primary">pyrB</name>
    <name type="ordered locus">ECUMN_4778</name>
</gene>